<feature type="chain" id="PRO_1000076629" description="dCTP deaminase">
    <location>
        <begin position="1"/>
        <end position="193"/>
    </location>
</feature>
<feature type="region of interest" description="Disordered" evidence="2">
    <location>
        <begin position="169"/>
        <end position="193"/>
    </location>
</feature>
<feature type="active site" description="Proton donor/acceptor" evidence="1">
    <location>
        <position position="138"/>
    </location>
</feature>
<feature type="binding site" evidence="1">
    <location>
        <begin position="110"/>
        <end position="115"/>
    </location>
    <ligand>
        <name>dCTP</name>
        <dbReference type="ChEBI" id="CHEBI:61481"/>
    </ligand>
</feature>
<feature type="binding site" evidence="1">
    <location>
        <position position="128"/>
    </location>
    <ligand>
        <name>dCTP</name>
        <dbReference type="ChEBI" id="CHEBI:61481"/>
    </ligand>
</feature>
<feature type="binding site" evidence="1">
    <location>
        <begin position="136"/>
        <end position="138"/>
    </location>
    <ligand>
        <name>dCTP</name>
        <dbReference type="ChEBI" id="CHEBI:61481"/>
    </ligand>
</feature>
<feature type="binding site" evidence="1">
    <location>
        <position position="171"/>
    </location>
    <ligand>
        <name>dCTP</name>
        <dbReference type="ChEBI" id="CHEBI:61481"/>
    </ligand>
</feature>
<feature type="binding site" evidence="1">
    <location>
        <position position="178"/>
    </location>
    <ligand>
        <name>dCTP</name>
        <dbReference type="ChEBI" id="CHEBI:61481"/>
    </ligand>
</feature>
<feature type="binding site" evidence="1">
    <location>
        <position position="182"/>
    </location>
    <ligand>
        <name>dCTP</name>
        <dbReference type="ChEBI" id="CHEBI:61481"/>
    </ligand>
</feature>
<reference key="1">
    <citation type="submission" date="2007-11" db="EMBL/GenBank/DDBJ databases">
        <authorList>
            <consortium name="The Salmonella enterica serovar Paratyphi B Genome Sequencing Project"/>
            <person name="McClelland M."/>
            <person name="Sanderson E.K."/>
            <person name="Porwollik S."/>
            <person name="Spieth J."/>
            <person name="Clifton W.S."/>
            <person name="Fulton R."/>
            <person name="Cordes M."/>
            <person name="Wollam A."/>
            <person name="Shah N."/>
            <person name="Pepin K."/>
            <person name="Bhonagiri V."/>
            <person name="Nash W."/>
            <person name="Johnson M."/>
            <person name="Thiruvilangam P."/>
            <person name="Wilson R."/>
        </authorList>
    </citation>
    <scope>NUCLEOTIDE SEQUENCE [LARGE SCALE GENOMIC DNA]</scope>
    <source>
        <strain>ATCC BAA-1250 / SPB7</strain>
    </source>
</reference>
<protein>
    <recommendedName>
        <fullName evidence="1">dCTP deaminase</fullName>
        <ecNumber evidence="1">3.5.4.13</ecNumber>
    </recommendedName>
    <alternativeName>
        <fullName evidence="1">Deoxycytidine triphosphate deaminase</fullName>
    </alternativeName>
</protein>
<sequence length="193" mass="21236">MRLCDRDIEAWLDEGRLSITPRPPVERINGATVDVRLGNKFRTFRGHTAAFIDLSGPKDEVSAALDRVMSDEIVLPDGEAFYLHPGELALAVTFESVTLPPDLVGWLDGRSSLARLGLMVHVTAHRIDPGWSGCIVLEFYNSGKLPLALRPGMLIGALSFEPLSGPAARPYNRRQDAKYRDQQGAVASRIDKD</sequence>
<proteinExistence type="inferred from homology"/>
<dbReference type="EC" id="3.5.4.13" evidence="1"/>
<dbReference type="EMBL" id="CP000886">
    <property type="protein sequence ID" value="ABX66329.1"/>
    <property type="molecule type" value="Genomic_DNA"/>
</dbReference>
<dbReference type="RefSeq" id="WP_001234783.1">
    <property type="nucleotide sequence ID" value="NC_010102.1"/>
</dbReference>
<dbReference type="SMR" id="A9N7M1"/>
<dbReference type="KEGG" id="spq:SPAB_00907"/>
<dbReference type="PATRIC" id="fig|1016998.12.peg.850"/>
<dbReference type="HOGENOM" id="CLU_087476_2_0_6"/>
<dbReference type="BioCyc" id="SENT1016998:SPAB_RS03740-MONOMER"/>
<dbReference type="UniPathway" id="UPA00610">
    <property type="reaction ID" value="UER00665"/>
</dbReference>
<dbReference type="Proteomes" id="UP000008556">
    <property type="component" value="Chromosome"/>
</dbReference>
<dbReference type="GO" id="GO:0008829">
    <property type="term" value="F:dCTP deaminase activity"/>
    <property type="evidence" value="ECO:0007669"/>
    <property type="project" value="UniProtKB-UniRule"/>
</dbReference>
<dbReference type="GO" id="GO:0000166">
    <property type="term" value="F:nucleotide binding"/>
    <property type="evidence" value="ECO:0007669"/>
    <property type="project" value="UniProtKB-KW"/>
</dbReference>
<dbReference type="GO" id="GO:0006226">
    <property type="term" value="P:dUMP biosynthetic process"/>
    <property type="evidence" value="ECO:0007669"/>
    <property type="project" value="UniProtKB-UniPathway"/>
</dbReference>
<dbReference type="GO" id="GO:0006229">
    <property type="term" value="P:dUTP biosynthetic process"/>
    <property type="evidence" value="ECO:0007669"/>
    <property type="project" value="UniProtKB-UniRule"/>
</dbReference>
<dbReference type="GO" id="GO:0015949">
    <property type="term" value="P:nucleobase-containing small molecule interconversion"/>
    <property type="evidence" value="ECO:0007669"/>
    <property type="project" value="TreeGrafter"/>
</dbReference>
<dbReference type="CDD" id="cd07557">
    <property type="entry name" value="trimeric_dUTPase"/>
    <property type="match status" value="1"/>
</dbReference>
<dbReference type="FunFam" id="2.70.40.10:FF:000003">
    <property type="entry name" value="dCTP deaminase"/>
    <property type="match status" value="1"/>
</dbReference>
<dbReference type="Gene3D" id="2.70.40.10">
    <property type="match status" value="1"/>
</dbReference>
<dbReference type="HAMAP" id="MF_00146">
    <property type="entry name" value="dCTP_deaminase"/>
    <property type="match status" value="1"/>
</dbReference>
<dbReference type="InterPro" id="IPR011962">
    <property type="entry name" value="dCTP_deaminase"/>
</dbReference>
<dbReference type="InterPro" id="IPR036157">
    <property type="entry name" value="dUTPase-like_sf"/>
</dbReference>
<dbReference type="InterPro" id="IPR033704">
    <property type="entry name" value="dUTPase_trimeric"/>
</dbReference>
<dbReference type="NCBIfam" id="TIGR02274">
    <property type="entry name" value="dCTP_deam"/>
    <property type="match status" value="1"/>
</dbReference>
<dbReference type="PANTHER" id="PTHR42680">
    <property type="entry name" value="DCTP DEAMINASE"/>
    <property type="match status" value="1"/>
</dbReference>
<dbReference type="PANTHER" id="PTHR42680:SF3">
    <property type="entry name" value="DCTP DEAMINASE"/>
    <property type="match status" value="1"/>
</dbReference>
<dbReference type="Pfam" id="PF22769">
    <property type="entry name" value="DCD"/>
    <property type="match status" value="1"/>
</dbReference>
<dbReference type="SUPFAM" id="SSF51283">
    <property type="entry name" value="dUTPase-like"/>
    <property type="match status" value="1"/>
</dbReference>
<comment type="function">
    <text evidence="1">Catalyzes the deamination of dCTP to dUTP.</text>
</comment>
<comment type="catalytic activity">
    <reaction evidence="1">
        <text>dCTP + H2O + H(+) = dUTP + NH4(+)</text>
        <dbReference type="Rhea" id="RHEA:22680"/>
        <dbReference type="ChEBI" id="CHEBI:15377"/>
        <dbReference type="ChEBI" id="CHEBI:15378"/>
        <dbReference type="ChEBI" id="CHEBI:28938"/>
        <dbReference type="ChEBI" id="CHEBI:61481"/>
        <dbReference type="ChEBI" id="CHEBI:61555"/>
        <dbReference type="EC" id="3.5.4.13"/>
    </reaction>
</comment>
<comment type="pathway">
    <text evidence="1">Pyrimidine metabolism; dUMP biosynthesis; dUMP from dCTP (dUTP route): step 1/2.</text>
</comment>
<comment type="subunit">
    <text evidence="1">Homotrimer.</text>
</comment>
<comment type="similarity">
    <text evidence="1">Belongs to the dCTP deaminase family.</text>
</comment>
<evidence type="ECO:0000255" key="1">
    <source>
        <dbReference type="HAMAP-Rule" id="MF_00146"/>
    </source>
</evidence>
<evidence type="ECO:0000256" key="2">
    <source>
        <dbReference type="SAM" id="MobiDB-lite"/>
    </source>
</evidence>
<keyword id="KW-0378">Hydrolase</keyword>
<keyword id="KW-0546">Nucleotide metabolism</keyword>
<keyword id="KW-0547">Nucleotide-binding</keyword>
<organism>
    <name type="scientific">Salmonella paratyphi B (strain ATCC BAA-1250 / SPB7)</name>
    <dbReference type="NCBI Taxonomy" id="1016998"/>
    <lineage>
        <taxon>Bacteria</taxon>
        <taxon>Pseudomonadati</taxon>
        <taxon>Pseudomonadota</taxon>
        <taxon>Gammaproteobacteria</taxon>
        <taxon>Enterobacterales</taxon>
        <taxon>Enterobacteriaceae</taxon>
        <taxon>Salmonella</taxon>
    </lineage>
</organism>
<gene>
    <name evidence="1" type="primary">dcd</name>
    <name type="ordered locus">SPAB_00907</name>
</gene>
<accession>A9N7M1</accession>
<name>DCD_SALPB</name>